<proteinExistence type="inferred from homology"/>
<sequence length="301" mass="32343">MSVRSAEYPRPKHFLVHLSDTHLVAQGELYDAVDASTRLREVLSGIVASGARPDALIFTGDLTDQGHPDAYAELKAIVEPVAAEIDAQVIWAMGNHDDRSTFRSLLLGEDATDHPVDNVYDLDGLRVITLDSSVPGHHYGEISDRQLDWLRSELAVPAPDGTILALHHPPVPCIQDLAVLVELRDQSRLADVLRGSDVRAILAGHLHYSTTATFAGIPVSVASSTCYTQDLNVEVGGQRGRDGAQGCNLVHVYDETIVHSVVPLGAHVTVGEPVDADEGARRLSAAGIRILESEKAGRSIV</sequence>
<comment type="cofactor">
    <cofactor evidence="2">
        <name>Fe(2+)</name>
        <dbReference type="ChEBI" id="CHEBI:29033"/>
    </cofactor>
    <text evidence="2">Binds 2 Fe(2+) ions per subunit.</text>
</comment>
<comment type="similarity">
    <text evidence="3">Belongs to the cyclic nucleotide phosphodiesterase class-III family.</text>
</comment>
<dbReference type="EC" id="3.1.4.-" evidence="1"/>
<dbReference type="EMBL" id="AP008957">
    <property type="protein sequence ID" value="BAH34773.1"/>
    <property type="molecule type" value="Genomic_DNA"/>
</dbReference>
<dbReference type="RefSeq" id="WP_020908405.1">
    <property type="nucleotide sequence ID" value="NC_012490.1"/>
</dbReference>
<dbReference type="SMR" id="C1A2D8"/>
<dbReference type="KEGG" id="rer:RER_40650"/>
<dbReference type="PATRIC" id="fig|234621.6.peg.4600"/>
<dbReference type="eggNOG" id="COG1409">
    <property type="taxonomic scope" value="Bacteria"/>
</dbReference>
<dbReference type="HOGENOM" id="CLU_070320_1_0_11"/>
<dbReference type="Proteomes" id="UP000002204">
    <property type="component" value="Chromosome"/>
</dbReference>
<dbReference type="GO" id="GO:0004115">
    <property type="term" value="F:3',5'-cyclic-AMP phosphodiesterase activity"/>
    <property type="evidence" value="ECO:0007669"/>
    <property type="project" value="UniProtKB-EC"/>
</dbReference>
<dbReference type="GO" id="GO:0046872">
    <property type="term" value="F:metal ion binding"/>
    <property type="evidence" value="ECO:0007669"/>
    <property type="project" value="UniProtKB-KW"/>
</dbReference>
<dbReference type="GO" id="GO:0000166">
    <property type="term" value="F:nucleotide binding"/>
    <property type="evidence" value="ECO:0007669"/>
    <property type="project" value="UniProtKB-KW"/>
</dbReference>
<dbReference type="CDD" id="cd07402">
    <property type="entry name" value="MPP_GpdQ"/>
    <property type="match status" value="1"/>
</dbReference>
<dbReference type="Gene3D" id="3.60.21.10">
    <property type="match status" value="1"/>
</dbReference>
<dbReference type="InterPro" id="IPR004843">
    <property type="entry name" value="Calcineurin-like_PHP_ApaH"/>
</dbReference>
<dbReference type="InterPro" id="IPR050884">
    <property type="entry name" value="CNP_phosphodiesterase-III"/>
</dbReference>
<dbReference type="InterPro" id="IPR026575">
    <property type="entry name" value="GpdQ/CpdA-like"/>
</dbReference>
<dbReference type="InterPro" id="IPR029052">
    <property type="entry name" value="Metallo-depent_PP-like"/>
</dbReference>
<dbReference type="PANTHER" id="PTHR42988:SF2">
    <property type="entry name" value="CYCLIC NUCLEOTIDE PHOSPHODIESTERASE CBUA0032-RELATED"/>
    <property type="match status" value="1"/>
</dbReference>
<dbReference type="PANTHER" id="PTHR42988">
    <property type="entry name" value="PHOSPHOHYDROLASE"/>
    <property type="match status" value="1"/>
</dbReference>
<dbReference type="Pfam" id="PF00149">
    <property type="entry name" value="Metallophos"/>
    <property type="match status" value="1"/>
</dbReference>
<dbReference type="SUPFAM" id="SSF56300">
    <property type="entry name" value="Metallo-dependent phosphatases"/>
    <property type="match status" value="1"/>
</dbReference>
<name>CNPD3_RHOE4</name>
<organism>
    <name type="scientific">Rhodococcus erythropolis (strain PR4 / NBRC 100887)</name>
    <dbReference type="NCBI Taxonomy" id="234621"/>
    <lineage>
        <taxon>Bacteria</taxon>
        <taxon>Bacillati</taxon>
        <taxon>Actinomycetota</taxon>
        <taxon>Actinomycetes</taxon>
        <taxon>Mycobacteriales</taxon>
        <taxon>Nocardiaceae</taxon>
        <taxon>Rhodococcus</taxon>
        <taxon>Rhodococcus erythropolis group</taxon>
    </lineage>
</organism>
<accession>C1A2D8</accession>
<gene>
    <name type="ordered locus">RER_40650</name>
</gene>
<keyword id="KW-0378">Hydrolase</keyword>
<keyword id="KW-0408">Iron</keyword>
<keyword id="KW-0479">Metal-binding</keyword>
<keyword id="KW-0547">Nucleotide-binding</keyword>
<reference key="1">
    <citation type="submission" date="2005-03" db="EMBL/GenBank/DDBJ databases">
        <title>Comparison of the complete genome sequences of Rhodococcus erythropolis PR4 and Rhodococcus opacus B4.</title>
        <authorList>
            <person name="Takarada H."/>
            <person name="Sekine M."/>
            <person name="Hosoyama A."/>
            <person name="Yamada R."/>
            <person name="Fujisawa T."/>
            <person name="Omata S."/>
            <person name="Shimizu A."/>
            <person name="Tsukatani N."/>
            <person name="Tanikawa S."/>
            <person name="Fujita N."/>
            <person name="Harayama S."/>
        </authorList>
    </citation>
    <scope>NUCLEOTIDE SEQUENCE [LARGE SCALE GENOMIC DNA]</scope>
    <source>
        <strain>PR4 / NBRC 100887</strain>
    </source>
</reference>
<protein>
    <recommendedName>
        <fullName evidence="1">Probable cyclic nucleotide phosphodiesterase RER_40650</fullName>
        <ecNumber evidence="1">3.1.4.-</ecNumber>
    </recommendedName>
</protein>
<feature type="chain" id="PRO_0000413376" description="Probable cyclic nucleotide phosphodiesterase RER_40650">
    <location>
        <begin position="1"/>
        <end position="301"/>
    </location>
</feature>
<feature type="binding site" evidence="2">
    <location>
        <position position="20"/>
    </location>
    <ligand>
        <name>Fe cation</name>
        <dbReference type="ChEBI" id="CHEBI:24875"/>
        <label>1</label>
    </ligand>
</feature>
<feature type="binding site" evidence="1">
    <location>
        <position position="22"/>
    </location>
    <ligand>
        <name>AMP</name>
        <dbReference type="ChEBI" id="CHEBI:456215"/>
    </ligand>
</feature>
<feature type="binding site" evidence="2">
    <location>
        <position position="22"/>
    </location>
    <ligand>
        <name>Fe cation</name>
        <dbReference type="ChEBI" id="CHEBI:24875"/>
        <label>1</label>
    </ligand>
</feature>
<feature type="binding site" evidence="1">
    <location>
        <position position="61"/>
    </location>
    <ligand>
        <name>AMP</name>
        <dbReference type="ChEBI" id="CHEBI:456215"/>
    </ligand>
</feature>
<feature type="binding site" evidence="2">
    <location>
        <position position="61"/>
    </location>
    <ligand>
        <name>Fe cation</name>
        <dbReference type="ChEBI" id="CHEBI:24875"/>
        <label>1</label>
    </ligand>
</feature>
<feature type="binding site" evidence="2">
    <location>
        <position position="61"/>
    </location>
    <ligand>
        <name>Fe cation</name>
        <dbReference type="ChEBI" id="CHEBI:24875"/>
        <label>2</label>
    </ligand>
</feature>
<feature type="binding site" evidence="1">
    <location>
        <begin position="95"/>
        <end position="96"/>
    </location>
    <ligand>
        <name>AMP</name>
        <dbReference type="ChEBI" id="CHEBI:456215"/>
    </ligand>
</feature>
<feature type="binding site" evidence="2">
    <location>
        <position position="95"/>
    </location>
    <ligand>
        <name>Fe cation</name>
        <dbReference type="ChEBI" id="CHEBI:24875"/>
        <label>2</label>
    </ligand>
</feature>
<feature type="binding site" evidence="2">
    <location>
        <position position="167"/>
    </location>
    <ligand>
        <name>Fe cation</name>
        <dbReference type="ChEBI" id="CHEBI:24875"/>
        <label>2</label>
    </ligand>
</feature>
<feature type="binding site" evidence="2">
    <location>
        <position position="205"/>
    </location>
    <ligand>
        <name>Fe cation</name>
        <dbReference type="ChEBI" id="CHEBI:24875"/>
        <label>2</label>
    </ligand>
</feature>
<feature type="binding site" evidence="1">
    <location>
        <position position="207"/>
    </location>
    <ligand>
        <name>AMP</name>
        <dbReference type="ChEBI" id="CHEBI:456215"/>
    </ligand>
</feature>
<feature type="binding site" evidence="2">
    <location>
        <position position="207"/>
    </location>
    <ligand>
        <name>Fe cation</name>
        <dbReference type="ChEBI" id="CHEBI:24875"/>
        <label>1</label>
    </ligand>
</feature>
<evidence type="ECO:0000250" key="1">
    <source>
        <dbReference type="UniProtKB" id="P9WP65"/>
    </source>
</evidence>
<evidence type="ECO:0000250" key="2">
    <source>
        <dbReference type="UniProtKB" id="Q6XBH1"/>
    </source>
</evidence>
<evidence type="ECO:0000305" key="3"/>